<name>RN_BACPU</name>
<reference key="1">
    <citation type="journal article" date="1995" name="FEBS Lett.">
        <title>Phosphate regulation of biosynthesis of extracellular RNases of endospore-forming bacteria.</title>
        <authorList>
            <person name="Znamenskaya L.V."/>
            <person name="Gabdrakhmanova L.A."/>
            <person name="Chernokalskaya E.B."/>
            <person name="Leshchinskaya I.B."/>
            <person name="Hartley R.W."/>
        </authorList>
    </citation>
    <scope>NUCLEOTIDE SEQUENCE [GENOMIC DNA]</scope>
    <source>
        <strain>KMM62</strain>
    </source>
</reference>
<evidence type="ECO:0000250" key="1"/>
<evidence type="ECO:0000255" key="2"/>
<evidence type="ECO:0000305" key="3"/>
<proteinExistence type="inferred from homology"/>
<organism>
    <name type="scientific">Bacillus pumilus</name>
    <name type="common">Bacillus mesentericus</name>
    <dbReference type="NCBI Taxonomy" id="1408"/>
    <lineage>
        <taxon>Bacteria</taxon>
        <taxon>Bacillati</taxon>
        <taxon>Bacillota</taxon>
        <taxon>Bacilli</taxon>
        <taxon>Bacillales</taxon>
        <taxon>Bacillaceae</taxon>
        <taxon>Bacillus</taxon>
    </lineage>
</organism>
<accession>P48068</accession>
<sequence>MKKISSVFTMFALIAAILFSGFIPQQAYAETTLTPTATNKTASIQLTSDVHTLAVINTFDGVADYLIRYKRLPDNYITKSQASALGWVASKGNLAEVAPGKSIGGDVFSNREGRLPSASGRTWREADINYVSGFRNADRLVYSSDWLIYKTTDHYATFTRIR</sequence>
<keyword id="KW-0255">Endonuclease</keyword>
<keyword id="KW-0378">Hydrolase</keyword>
<keyword id="KW-0540">Nuclease</keyword>
<keyword id="KW-0964">Secreted</keyword>
<keyword id="KW-0732">Signal</keyword>
<comment type="function">
    <text>This is a purine-specific ribonuclease.</text>
</comment>
<comment type="subcellular location">
    <subcellularLocation>
        <location>Secreted</location>
    </subcellularLocation>
</comment>
<comment type="similarity">
    <text evidence="3">Belongs to the ribonuclease N1/T1 family.</text>
</comment>
<dbReference type="EC" id="3.1.27.-"/>
<dbReference type="EMBL" id="U06867">
    <property type="protein sequence ID" value="AAA75288.1"/>
    <property type="molecule type" value="Genomic_DNA"/>
</dbReference>
<dbReference type="PIR" id="S51002">
    <property type="entry name" value="S51002"/>
</dbReference>
<dbReference type="RefSeq" id="WP_044139011.1">
    <property type="nucleotide sequence ID" value="NZ_JXCL01000002.1"/>
</dbReference>
<dbReference type="SMR" id="P48068"/>
<dbReference type="DrugBank" id="DB03315">
    <property type="generic name" value="Guanosine 3'-monophosphate"/>
</dbReference>
<dbReference type="PATRIC" id="fig|1408.43.peg.178"/>
<dbReference type="GO" id="GO:0005576">
    <property type="term" value="C:extracellular region"/>
    <property type="evidence" value="ECO:0007669"/>
    <property type="project" value="UniProtKB-SubCell"/>
</dbReference>
<dbReference type="GO" id="GO:0003723">
    <property type="term" value="F:RNA binding"/>
    <property type="evidence" value="ECO:0007669"/>
    <property type="project" value="InterPro"/>
</dbReference>
<dbReference type="GO" id="GO:0004521">
    <property type="term" value="F:RNA endonuclease activity"/>
    <property type="evidence" value="ECO:0007669"/>
    <property type="project" value="InterPro"/>
</dbReference>
<dbReference type="CDD" id="cd00933">
    <property type="entry name" value="barnase"/>
    <property type="match status" value="1"/>
</dbReference>
<dbReference type="Gene3D" id="3.10.450.30">
    <property type="entry name" value="Microbial ribonucleases"/>
    <property type="match status" value="1"/>
</dbReference>
<dbReference type="InterPro" id="IPR001887">
    <property type="entry name" value="Barnase"/>
</dbReference>
<dbReference type="InterPro" id="IPR000026">
    <property type="entry name" value="N1-like"/>
</dbReference>
<dbReference type="InterPro" id="IPR016191">
    <property type="entry name" value="Ribonuclease/ribotoxin"/>
</dbReference>
<dbReference type="Pfam" id="PF00545">
    <property type="entry name" value="Ribonuclease"/>
    <property type="match status" value="1"/>
</dbReference>
<dbReference type="PIRSF" id="PIRSF001013">
    <property type="entry name" value="Barnase"/>
    <property type="match status" value="1"/>
</dbReference>
<dbReference type="PRINTS" id="PR00117">
    <property type="entry name" value="BARNASE"/>
</dbReference>
<dbReference type="SUPFAM" id="SSF53933">
    <property type="entry name" value="Microbial ribonucleases"/>
    <property type="match status" value="1"/>
</dbReference>
<feature type="signal peptide" evidence="2">
    <location>
        <begin position="1"/>
        <end position="29"/>
    </location>
</feature>
<feature type="propeptide" id="PRO_0000030826">
    <location>
        <begin position="30"/>
        <end position="53"/>
    </location>
</feature>
<feature type="chain" id="PRO_0000030827" description="Ribonuclease">
    <location>
        <begin position="54"/>
        <end position="162"/>
    </location>
</feature>
<feature type="active site" description="Proton acceptor" evidence="1">
    <location>
        <position position="125"/>
    </location>
</feature>
<feature type="active site" description="Proton donor" evidence="1">
    <location>
        <position position="154"/>
    </location>
</feature>
<protein>
    <recommendedName>
        <fullName>Ribonuclease</fullName>
        <ecNumber>3.1.27.-</ecNumber>
    </recommendedName>
    <alternativeName>
        <fullName>RNase Bp</fullName>
    </alternativeName>
</protein>